<sequence>MIIFSNLSLKRGQTELLENASATINPKQKVGLVGKNGCGKSSLFALLKKELMPEGGEVNYPANWRVSWVNQETPALDISAIDYVIQGDREYCRLQQKLERANERNDGNAIARIHGQLETLDAWTIQSRAASLLHGLGFSQEETIQPVKAFSGGWRMRLNLAQALLCPSDLLLLDEPTNHLDLDAVIWLERWLVQYQGTLVLISHDRDFLDPIVTKILHIENQKLNEYTGDYSSFEVQRATKLAQQTAMYRQQQQKISHLQKYIDRFKAKATKAKQAQSRMKALERMELIAPAYVDNPFTFEFRPPQSLPNPLVMIEQASAGYGIGESAVEILSKIKLNLVPGSRIGLLGKNGAGKSTLIKLLAGELTALSGTVQLAKGVQLGYFAQHQLDTLRADESALWHMQKLAPEQTEQQVRDYLGSFAFHGDKVNQAVKSFSGGEKARLVLALIVWQRPNLLLLDEPTNHLDLDMRQALTEALVDYEGSLVVVSHDRHLLRNTVEEFYLVHDKKVEEFKGDLEDYQKWLSEQNSTSENKVSEKVGDNENSVQNRKEQKRREAELRQQTAPLRKKITQLEEKMNKFSSELANIENQLADTELYNAENKEKLTALLAQQVDVKKALDDVETEWMTAQEELEEMLQA</sequence>
<gene>
    <name evidence="4" type="primary">yheS</name>
    <name type="ordered locus">HI_0658</name>
</gene>
<protein>
    <recommendedName>
        <fullName evidence="4">Probable ATP-binding protein YheS</fullName>
    </recommendedName>
</protein>
<feature type="chain" id="PRO_0000093189" description="Probable ATP-binding protein YheS">
    <location>
        <begin position="1"/>
        <end position="638"/>
    </location>
</feature>
<feature type="domain" description="ABC transporter 1" evidence="2">
    <location>
        <begin position="2"/>
        <end position="246"/>
    </location>
</feature>
<feature type="domain" description="ABC transporter 2" evidence="2">
    <location>
        <begin position="313"/>
        <end position="531"/>
    </location>
</feature>
<feature type="region of interest" description="Disordered" evidence="3">
    <location>
        <begin position="525"/>
        <end position="563"/>
    </location>
</feature>
<feature type="compositionally biased region" description="Basic and acidic residues" evidence="3">
    <location>
        <begin position="547"/>
        <end position="558"/>
    </location>
</feature>
<feature type="binding site" evidence="2">
    <location>
        <begin position="34"/>
        <end position="41"/>
    </location>
    <ligand>
        <name>ATP</name>
        <dbReference type="ChEBI" id="CHEBI:30616"/>
        <label>1</label>
    </ligand>
</feature>
<feature type="binding site" evidence="2">
    <location>
        <begin position="349"/>
        <end position="356"/>
    </location>
    <ligand>
        <name>ATP</name>
        <dbReference type="ChEBI" id="CHEBI:30616"/>
        <label>2</label>
    </ligand>
</feature>
<organism>
    <name type="scientific">Haemophilus influenzae (strain ATCC 51907 / DSM 11121 / KW20 / Rd)</name>
    <dbReference type="NCBI Taxonomy" id="71421"/>
    <lineage>
        <taxon>Bacteria</taxon>
        <taxon>Pseudomonadati</taxon>
        <taxon>Pseudomonadota</taxon>
        <taxon>Gammaproteobacteria</taxon>
        <taxon>Pasteurellales</taxon>
        <taxon>Pasteurellaceae</taxon>
        <taxon>Haemophilus</taxon>
    </lineage>
</organism>
<reference key="1">
    <citation type="journal article" date="1995" name="Science">
        <title>Whole-genome random sequencing and assembly of Haemophilus influenzae Rd.</title>
        <authorList>
            <person name="Fleischmann R.D."/>
            <person name="Adams M.D."/>
            <person name="White O."/>
            <person name="Clayton R.A."/>
            <person name="Kirkness E.F."/>
            <person name="Kerlavage A.R."/>
            <person name="Bult C.J."/>
            <person name="Tomb J.-F."/>
            <person name="Dougherty B.A."/>
            <person name="Merrick J.M."/>
            <person name="McKenney K."/>
            <person name="Sutton G.G."/>
            <person name="FitzHugh W."/>
            <person name="Fields C.A."/>
            <person name="Gocayne J.D."/>
            <person name="Scott J.D."/>
            <person name="Shirley R."/>
            <person name="Liu L.-I."/>
            <person name="Glodek A."/>
            <person name="Kelley J.M."/>
            <person name="Weidman J.F."/>
            <person name="Phillips C.A."/>
            <person name="Spriggs T."/>
            <person name="Hedblom E."/>
            <person name="Cotton M.D."/>
            <person name="Utterback T.R."/>
            <person name="Hanna M.C."/>
            <person name="Nguyen D.T."/>
            <person name="Saudek D.M."/>
            <person name="Brandon R.C."/>
            <person name="Fine L.D."/>
            <person name="Fritchman J.L."/>
            <person name="Fuhrmann J.L."/>
            <person name="Geoghagen N.S.M."/>
            <person name="Gnehm C.L."/>
            <person name="McDonald L.A."/>
            <person name="Small K.V."/>
            <person name="Fraser C.M."/>
            <person name="Smith H.O."/>
            <person name="Venter J.C."/>
        </authorList>
    </citation>
    <scope>NUCLEOTIDE SEQUENCE [LARGE SCALE GENOMIC DNA]</scope>
    <source>
        <strain>ATCC 51907 / DSM 11121 / KW20 / Rd</strain>
    </source>
</reference>
<reference key="2">
    <citation type="journal article" date="2000" name="Electrophoresis">
        <title>Two-dimensional map of the proteome of Haemophilus influenzae.</title>
        <authorList>
            <person name="Langen H."/>
            <person name="Takacs B."/>
            <person name="Evers S."/>
            <person name="Berndt P."/>
            <person name="Lahm H.W."/>
            <person name="Wipf B."/>
            <person name="Gray C."/>
            <person name="Fountoulakis M."/>
        </authorList>
    </citation>
    <scope>IDENTIFICATION BY MASS SPECTROMETRY</scope>
    <source>
        <strain>ATCC 51907 / DSM 11121 / KW20 / Rd</strain>
    </source>
</reference>
<evidence type="ECO:0000250" key="1">
    <source>
        <dbReference type="UniProtKB" id="A0A0H2VBH0"/>
    </source>
</evidence>
<evidence type="ECO:0000255" key="2">
    <source>
        <dbReference type="PROSITE-ProRule" id="PRU00434"/>
    </source>
</evidence>
<evidence type="ECO:0000256" key="3">
    <source>
        <dbReference type="SAM" id="MobiDB-lite"/>
    </source>
</evidence>
<evidence type="ECO:0000305" key="4"/>
<accession>P44808</accession>
<keyword id="KW-0067">ATP-binding</keyword>
<keyword id="KW-0547">Nucleotide-binding</keyword>
<keyword id="KW-1185">Reference proteome</keyword>
<keyword id="KW-0677">Repeat</keyword>
<proteinExistence type="evidence at protein level"/>
<dbReference type="EMBL" id="L42023">
    <property type="protein sequence ID" value="AAC22317.1"/>
    <property type="molecule type" value="Genomic_DNA"/>
</dbReference>
<dbReference type="PIR" id="C64156">
    <property type="entry name" value="C64156"/>
</dbReference>
<dbReference type="RefSeq" id="NP_438818.1">
    <property type="nucleotide sequence ID" value="NC_000907.1"/>
</dbReference>
<dbReference type="SMR" id="P44808"/>
<dbReference type="STRING" id="71421.HI_0658"/>
<dbReference type="EnsemblBacteria" id="AAC22317">
    <property type="protein sequence ID" value="AAC22317"/>
    <property type="gene ID" value="HI_0658"/>
</dbReference>
<dbReference type="KEGG" id="hin:HI_0658"/>
<dbReference type="PATRIC" id="fig|71421.8.peg.687"/>
<dbReference type="eggNOG" id="COG0488">
    <property type="taxonomic scope" value="Bacteria"/>
</dbReference>
<dbReference type="HOGENOM" id="CLU_000604_36_0_6"/>
<dbReference type="OrthoDB" id="9762051at2"/>
<dbReference type="PhylomeDB" id="P44808"/>
<dbReference type="BioCyc" id="HINF71421:G1GJ1-693-MONOMER"/>
<dbReference type="Proteomes" id="UP000000579">
    <property type="component" value="Chromosome"/>
</dbReference>
<dbReference type="GO" id="GO:0005524">
    <property type="term" value="F:ATP binding"/>
    <property type="evidence" value="ECO:0000318"/>
    <property type="project" value="GO_Central"/>
</dbReference>
<dbReference type="GO" id="GO:0016887">
    <property type="term" value="F:ATP hydrolysis activity"/>
    <property type="evidence" value="ECO:0007669"/>
    <property type="project" value="InterPro"/>
</dbReference>
<dbReference type="CDD" id="cd03221">
    <property type="entry name" value="ABCF_EF-3"/>
    <property type="match status" value="2"/>
</dbReference>
<dbReference type="FunFam" id="3.40.50.300:FF:002053">
    <property type="entry name" value="ABC transporter ATP-binding protein"/>
    <property type="match status" value="1"/>
</dbReference>
<dbReference type="FunFam" id="3.40.50.300:FF:000011">
    <property type="entry name" value="Putative ABC transporter ATP-binding component"/>
    <property type="match status" value="1"/>
</dbReference>
<dbReference type="Gene3D" id="3.40.50.300">
    <property type="entry name" value="P-loop containing nucleotide triphosphate hydrolases"/>
    <property type="match status" value="2"/>
</dbReference>
<dbReference type="InterPro" id="IPR003593">
    <property type="entry name" value="AAA+_ATPase"/>
</dbReference>
<dbReference type="InterPro" id="IPR032781">
    <property type="entry name" value="ABC_tran_Xtn"/>
</dbReference>
<dbReference type="InterPro" id="IPR003439">
    <property type="entry name" value="ABC_transporter-like_ATP-bd"/>
</dbReference>
<dbReference type="InterPro" id="IPR017871">
    <property type="entry name" value="ABC_transporter-like_CS"/>
</dbReference>
<dbReference type="InterPro" id="IPR050611">
    <property type="entry name" value="ABCF_EF3_subfamily"/>
</dbReference>
<dbReference type="InterPro" id="IPR027417">
    <property type="entry name" value="P-loop_NTPase"/>
</dbReference>
<dbReference type="NCBIfam" id="NF007921">
    <property type="entry name" value="PRK10636.1"/>
    <property type="match status" value="1"/>
</dbReference>
<dbReference type="PANTHER" id="PTHR19211:SF14">
    <property type="entry name" value="ATP-BINDING CASSETTE SUB-FAMILY F MEMBER 1"/>
    <property type="match status" value="1"/>
</dbReference>
<dbReference type="PANTHER" id="PTHR19211">
    <property type="entry name" value="ATP-BINDING TRANSPORT PROTEIN-RELATED"/>
    <property type="match status" value="1"/>
</dbReference>
<dbReference type="Pfam" id="PF00005">
    <property type="entry name" value="ABC_tran"/>
    <property type="match status" value="2"/>
</dbReference>
<dbReference type="Pfam" id="PF12848">
    <property type="entry name" value="ABC_tran_Xtn"/>
    <property type="match status" value="1"/>
</dbReference>
<dbReference type="SMART" id="SM00382">
    <property type="entry name" value="AAA"/>
    <property type="match status" value="2"/>
</dbReference>
<dbReference type="SUPFAM" id="SSF52540">
    <property type="entry name" value="P-loop containing nucleoside triphosphate hydrolases"/>
    <property type="match status" value="2"/>
</dbReference>
<dbReference type="PROSITE" id="PS00211">
    <property type="entry name" value="ABC_TRANSPORTER_1"/>
    <property type="match status" value="2"/>
</dbReference>
<dbReference type="PROSITE" id="PS50893">
    <property type="entry name" value="ABC_TRANSPORTER_2"/>
    <property type="match status" value="2"/>
</dbReference>
<name>YHES_HAEIN</name>
<comment type="function">
    <text evidence="1">Genetic data indicate it may be involved in ribosome assembly or function.</text>
</comment>
<comment type="similarity">
    <text evidence="4">Belongs to the ABC transporter superfamily. ABCF family. YheS subfamily.</text>
</comment>